<keyword id="KW-0328">Glycosyltransferase</keyword>
<keyword id="KW-0808">Transferase</keyword>
<proteinExistence type="inferred from homology"/>
<gene>
    <name evidence="1" type="primary">deoA</name>
    <name type="ordered locus">Shal_3135</name>
</gene>
<reference key="1">
    <citation type="submission" date="2008-01" db="EMBL/GenBank/DDBJ databases">
        <title>Complete sequence of Shewanella halifaxensis HAW-EB4.</title>
        <authorList>
            <consortium name="US DOE Joint Genome Institute"/>
            <person name="Copeland A."/>
            <person name="Lucas S."/>
            <person name="Lapidus A."/>
            <person name="Glavina del Rio T."/>
            <person name="Dalin E."/>
            <person name="Tice H."/>
            <person name="Bruce D."/>
            <person name="Goodwin L."/>
            <person name="Pitluck S."/>
            <person name="Sims D."/>
            <person name="Brettin T."/>
            <person name="Detter J.C."/>
            <person name="Han C."/>
            <person name="Kuske C.R."/>
            <person name="Schmutz J."/>
            <person name="Larimer F."/>
            <person name="Land M."/>
            <person name="Hauser L."/>
            <person name="Kyrpides N."/>
            <person name="Kim E."/>
            <person name="Zhao J.-S."/>
            <person name="Richardson P."/>
        </authorList>
    </citation>
    <scope>NUCLEOTIDE SEQUENCE [LARGE SCALE GENOMIC DNA]</scope>
    <source>
        <strain>HAW-EB4</strain>
    </source>
</reference>
<accession>B0TQ90</accession>
<name>TYPH_SHEHH</name>
<sequence length="443" mass="47020">MFLAQEIIRKKRNAEVLSTEEIQFFVNGITNNTVSEGQIAAFGMAVYFNDMNMDERIALTTAMRDSGTVLDWKSLDLNGPIIDKHSTGGVGDVISLMLGPMAAACGGYVPMISGRGLGHTGGTLDKFDAIPGYNTEPDSALFRKVVKEAGVAIIGQTGDLVPADKRFYSIRDNTATVESISLITASILSKKLAAGLDALAMDVKVGTGAFMPTYELSEELARSITAVANGAGTKTTALLTDMNQVLASCAGNAVEVKEAVDFMTGAYRNPRLYEVTMGLCAEMLVLGGIASNEAEARVKLNAVLDNGKAAEIFGRMVSGLGGPADFVENYSKYLPDSQIIRPVYADRAGFASAMDTRELGLAVVTLGGGRRKPGDVLDYSVGLSKVCALGDEINADKPIAFIHAQSEGAFAEAEAAVKKAIHIGDTKPDKTPEIYRYIRESDL</sequence>
<evidence type="ECO:0000255" key="1">
    <source>
        <dbReference type="HAMAP-Rule" id="MF_01628"/>
    </source>
</evidence>
<protein>
    <recommendedName>
        <fullName evidence="1">Thymidine phosphorylase</fullName>
        <ecNumber evidence="1">2.4.2.4</ecNumber>
    </recommendedName>
    <alternativeName>
        <fullName evidence="1">TdRPase</fullName>
    </alternativeName>
</protein>
<comment type="function">
    <text evidence="1">The enzymes which catalyze the reversible phosphorolysis of pyrimidine nucleosides are involved in the degradation of these compounds and in their utilization as carbon and energy sources, or in the rescue of pyrimidine bases for nucleotide synthesis.</text>
</comment>
<comment type="catalytic activity">
    <reaction evidence="1">
        <text>thymidine + phosphate = 2-deoxy-alpha-D-ribose 1-phosphate + thymine</text>
        <dbReference type="Rhea" id="RHEA:16037"/>
        <dbReference type="ChEBI" id="CHEBI:17748"/>
        <dbReference type="ChEBI" id="CHEBI:17821"/>
        <dbReference type="ChEBI" id="CHEBI:43474"/>
        <dbReference type="ChEBI" id="CHEBI:57259"/>
        <dbReference type="EC" id="2.4.2.4"/>
    </reaction>
</comment>
<comment type="pathway">
    <text evidence="1">Pyrimidine metabolism; dTMP biosynthesis via salvage pathway; dTMP from thymine: step 1/2.</text>
</comment>
<comment type="subunit">
    <text evidence="1">Homodimer.</text>
</comment>
<comment type="similarity">
    <text evidence="1">Belongs to the thymidine/pyrimidine-nucleoside phosphorylase family.</text>
</comment>
<dbReference type="EC" id="2.4.2.4" evidence="1"/>
<dbReference type="EMBL" id="CP000931">
    <property type="protein sequence ID" value="ABZ77682.1"/>
    <property type="molecule type" value="Genomic_DNA"/>
</dbReference>
<dbReference type="RefSeq" id="WP_012278207.1">
    <property type="nucleotide sequence ID" value="NC_010334.1"/>
</dbReference>
<dbReference type="SMR" id="B0TQ90"/>
<dbReference type="STRING" id="458817.Shal_3135"/>
<dbReference type="KEGG" id="shl:Shal_3135"/>
<dbReference type="eggNOG" id="COG0213">
    <property type="taxonomic scope" value="Bacteria"/>
</dbReference>
<dbReference type="HOGENOM" id="CLU_025040_0_1_6"/>
<dbReference type="OrthoDB" id="9763887at2"/>
<dbReference type="UniPathway" id="UPA00578">
    <property type="reaction ID" value="UER00638"/>
</dbReference>
<dbReference type="Proteomes" id="UP000001317">
    <property type="component" value="Chromosome"/>
</dbReference>
<dbReference type="GO" id="GO:0005829">
    <property type="term" value="C:cytosol"/>
    <property type="evidence" value="ECO:0007669"/>
    <property type="project" value="TreeGrafter"/>
</dbReference>
<dbReference type="GO" id="GO:0004645">
    <property type="term" value="F:1,4-alpha-oligoglucan phosphorylase activity"/>
    <property type="evidence" value="ECO:0007669"/>
    <property type="project" value="InterPro"/>
</dbReference>
<dbReference type="GO" id="GO:0009032">
    <property type="term" value="F:thymidine phosphorylase activity"/>
    <property type="evidence" value="ECO:0007669"/>
    <property type="project" value="UniProtKB-UniRule"/>
</dbReference>
<dbReference type="GO" id="GO:0006206">
    <property type="term" value="P:pyrimidine nucleobase metabolic process"/>
    <property type="evidence" value="ECO:0007669"/>
    <property type="project" value="InterPro"/>
</dbReference>
<dbReference type="GO" id="GO:0046104">
    <property type="term" value="P:thymidine metabolic process"/>
    <property type="evidence" value="ECO:0007669"/>
    <property type="project" value="UniProtKB-UniRule"/>
</dbReference>
<dbReference type="FunFam" id="3.40.1030.10:FF:000001">
    <property type="entry name" value="Thymidine phosphorylase"/>
    <property type="match status" value="1"/>
</dbReference>
<dbReference type="FunFam" id="3.90.1170.30:FF:000001">
    <property type="entry name" value="Thymidine phosphorylase"/>
    <property type="match status" value="1"/>
</dbReference>
<dbReference type="Gene3D" id="3.40.1030.10">
    <property type="entry name" value="Nucleoside phosphorylase/phosphoribosyltransferase catalytic domain"/>
    <property type="match status" value="1"/>
</dbReference>
<dbReference type="Gene3D" id="3.90.1170.30">
    <property type="entry name" value="Pyrimidine nucleoside phosphorylase-like, C-terminal domain"/>
    <property type="match status" value="1"/>
</dbReference>
<dbReference type="Gene3D" id="1.20.970.10">
    <property type="entry name" value="Transferase, Pyrimidine Nucleoside Phosphorylase, Chain C"/>
    <property type="match status" value="1"/>
</dbReference>
<dbReference type="HAMAP" id="MF_01628">
    <property type="entry name" value="Thymid_phosp"/>
    <property type="match status" value="1"/>
</dbReference>
<dbReference type="InterPro" id="IPR000312">
    <property type="entry name" value="Glycosyl_Trfase_fam3"/>
</dbReference>
<dbReference type="InterPro" id="IPR017459">
    <property type="entry name" value="Glycosyl_Trfase_fam3_N_dom"/>
</dbReference>
<dbReference type="InterPro" id="IPR036320">
    <property type="entry name" value="Glycosyl_Trfase_fam3_N_dom_sf"/>
</dbReference>
<dbReference type="InterPro" id="IPR035902">
    <property type="entry name" value="Nuc_phospho_transferase"/>
</dbReference>
<dbReference type="InterPro" id="IPR036566">
    <property type="entry name" value="PYNP-like_C_sf"/>
</dbReference>
<dbReference type="InterPro" id="IPR013102">
    <property type="entry name" value="PYNP_C"/>
</dbReference>
<dbReference type="InterPro" id="IPR018090">
    <property type="entry name" value="Pyrmidine_PPas_bac/euk"/>
</dbReference>
<dbReference type="InterPro" id="IPR017872">
    <property type="entry name" value="Pyrmidine_PPase_CS"/>
</dbReference>
<dbReference type="InterPro" id="IPR000053">
    <property type="entry name" value="Thymidine/pyrmidine_PPase"/>
</dbReference>
<dbReference type="InterPro" id="IPR013465">
    <property type="entry name" value="Thymidine_Pase"/>
</dbReference>
<dbReference type="NCBIfam" id="NF004490">
    <property type="entry name" value="PRK05820.1"/>
    <property type="match status" value="1"/>
</dbReference>
<dbReference type="NCBIfam" id="TIGR02643">
    <property type="entry name" value="T_phosphoryl"/>
    <property type="match status" value="1"/>
</dbReference>
<dbReference type="NCBIfam" id="TIGR02644">
    <property type="entry name" value="Y_phosphoryl"/>
    <property type="match status" value="1"/>
</dbReference>
<dbReference type="PANTHER" id="PTHR10515">
    <property type="entry name" value="THYMIDINE PHOSPHORYLASE"/>
    <property type="match status" value="1"/>
</dbReference>
<dbReference type="PANTHER" id="PTHR10515:SF0">
    <property type="entry name" value="THYMIDINE PHOSPHORYLASE"/>
    <property type="match status" value="1"/>
</dbReference>
<dbReference type="Pfam" id="PF02885">
    <property type="entry name" value="Glycos_trans_3N"/>
    <property type="match status" value="1"/>
</dbReference>
<dbReference type="Pfam" id="PF00591">
    <property type="entry name" value="Glycos_transf_3"/>
    <property type="match status" value="1"/>
</dbReference>
<dbReference type="Pfam" id="PF07831">
    <property type="entry name" value="PYNP_C"/>
    <property type="match status" value="1"/>
</dbReference>
<dbReference type="PIRSF" id="PIRSF000478">
    <property type="entry name" value="TP_PyNP"/>
    <property type="match status" value="1"/>
</dbReference>
<dbReference type="SMART" id="SM00941">
    <property type="entry name" value="PYNP_C"/>
    <property type="match status" value="1"/>
</dbReference>
<dbReference type="SUPFAM" id="SSF52418">
    <property type="entry name" value="Nucleoside phosphorylase/phosphoribosyltransferase catalytic domain"/>
    <property type="match status" value="1"/>
</dbReference>
<dbReference type="SUPFAM" id="SSF47648">
    <property type="entry name" value="Nucleoside phosphorylase/phosphoribosyltransferase N-terminal domain"/>
    <property type="match status" value="1"/>
</dbReference>
<dbReference type="SUPFAM" id="SSF54680">
    <property type="entry name" value="Pyrimidine nucleoside phosphorylase C-terminal domain"/>
    <property type="match status" value="1"/>
</dbReference>
<dbReference type="PROSITE" id="PS00647">
    <property type="entry name" value="THYMID_PHOSPHORYLASE"/>
    <property type="match status" value="1"/>
</dbReference>
<feature type="chain" id="PRO_1000088110" description="Thymidine phosphorylase">
    <location>
        <begin position="1"/>
        <end position="443"/>
    </location>
</feature>
<organism>
    <name type="scientific">Shewanella halifaxensis (strain HAW-EB4)</name>
    <dbReference type="NCBI Taxonomy" id="458817"/>
    <lineage>
        <taxon>Bacteria</taxon>
        <taxon>Pseudomonadati</taxon>
        <taxon>Pseudomonadota</taxon>
        <taxon>Gammaproteobacteria</taxon>
        <taxon>Alteromonadales</taxon>
        <taxon>Shewanellaceae</taxon>
        <taxon>Shewanella</taxon>
    </lineage>
</organism>